<name>AA2AR_HORSE</name>
<reference key="1">
    <citation type="submission" date="2003-09" db="EMBL/GenBank/DDBJ databases">
        <title>Cloning and expression of a full-length transcript for the equine adenosine A2A receptor.</title>
        <authorList>
            <person name="Vandenplas M.L."/>
            <person name="Okinaga T."/>
            <person name="Brandon C.I."/>
            <person name="Eastman A."/>
            <person name="Cordonnier-Pratt M.-M."/>
            <person name="Pratt L.H."/>
            <person name="Moore J.N."/>
        </authorList>
    </citation>
    <scope>NUCLEOTIDE SEQUENCE [MRNA]</scope>
</reference>
<dbReference type="EMBL" id="AY394857">
    <property type="protein sequence ID" value="AAQ95165.1"/>
    <property type="molecule type" value="mRNA"/>
</dbReference>
<dbReference type="RefSeq" id="NP_001075366.1">
    <property type="nucleotide sequence ID" value="NM_001081897.1"/>
</dbReference>
<dbReference type="RefSeq" id="XP_023502347.1">
    <property type="nucleotide sequence ID" value="XM_023646579.2"/>
</dbReference>
<dbReference type="RefSeq" id="XP_070131145.1">
    <property type="nucleotide sequence ID" value="XM_070275044.1"/>
</dbReference>
<dbReference type="SMR" id="Q6TLI7"/>
<dbReference type="FunCoup" id="Q6TLI7">
    <property type="interactions" value="148"/>
</dbReference>
<dbReference type="STRING" id="9796.ENSECAP00000024432"/>
<dbReference type="GlyCosmos" id="Q6TLI7">
    <property type="glycosylation" value="1 site, No reported glycans"/>
</dbReference>
<dbReference type="PaxDb" id="9796-ENSECAP00000024432"/>
<dbReference type="Ensembl" id="ENSECAT00000039922.1">
    <property type="protein sequence ID" value="ENSECAP00000024432.1"/>
    <property type="gene ID" value="ENSECAG00000034739.2"/>
</dbReference>
<dbReference type="GeneID" id="100034039"/>
<dbReference type="KEGG" id="ecb:100034039"/>
<dbReference type="CTD" id="135"/>
<dbReference type="VGNC" id="VGNC:111782">
    <property type="gene designation" value="ADORA2A"/>
</dbReference>
<dbReference type="GeneTree" id="ENSGT01030000234555"/>
<dbReference type="InParanoid" id="Q6TLI7"/>
<dbReference type="OMA" id="HESHGDM"/>
<dbReference type="OrthoDB" id="9445642at2759"/>
<dbReference type="Proteomes" id="UP000002281">
    <property type="component" value="Chromosome 8"/>
</dbReference>
<dbReference type="Bgee" id="ENSECAG00000034739">
    <property type="expression patterns" value="Expressed in leukocyte and 19 other cell types or tissues"/>
</dbReference>
<dbReference type="GO" id="GO:0005886">
    <property type="term" value="C:plasma membrane"/>
    <property type="evidence" value="ECO:0000318"/>
    <property type="project" value="GO_Central"/>
</dbReference>
<dbReference type="GO" id="GO:0098794">
    <property type="term" value="C:postsynapse"/>
    <property type="evidence" value="ECO:0007669"/>
    <property type="project" value="GOC"/>
</dbReference>
<dbReference type="GO" id="GO:0005516">
    <property type="term" value="F:calmodulin binding"/>
    <property type="evidence" value="ECO:0007669"/>
    <property type="project" value="Ensembl"/>
</dbReference>
<dbReference type="GO" id="GO:0019899">
    <property type="term" value="F:enzyme binding"/>
    <property type="evidence" value="ECO:0007669"/>
    <property type="project" value="Ensembl"/>
</dbReference>
<dbReference type="GO" id="GO:0001609">
    <property type="term" value="F:G protein-coupled adenosine receptor activity"/>
    <property type="evidence" value="ECO:0000318"/>
    <property type="project" value="GO_Central"/>
</dbReference>
<dbReference type="GO" id="GO:0042802">
    <property type="term" value="F:identical protein binding"/>
    <property type="evidence" value="ECO:0007669"/>
    <property type="project" value="Ensembl"/>
</dbReference>
<dbReference type="GO" id="GO:0008289">
    <property type="term" value="F:lipid binding"/>
    <property type="evidence" value="ECO:0007669"/>
    <property type="project" value="Ensembl"/>
</dbReference>
<dbReference type="GO" id="GO:0007189">
    <property type="term" value="P:adenylate cyclase-activating G protein-coupled receptor signaling pathway"/>
    <property type="evidence" value="ECO:0000318"/>
    <property type="project" value="GO_Central"/>
</dbReference>
<dbReference type="GO" id="GO:0097190">
    <property type="term" value="P:apoptotic signaling pathway"/>
    <property type="evidence" value="ECO:0007669"/>
    <property type="project" value="Ensembl"/>
</dbReference>
<dbReference type="GO" id="GO:0042755">
    <property type="term" value="P:eating behavior"/>
    <property type="evidence" value="ECO:0007669"/>
    <property type="project" value="Ensembl"/>
</dbReference>
<dbReference type="GO" id="GO:0001973">
    <property type="term" value="P:G protein-coupled adenosine receptor signaling pathway"/>
    <property type="evidence" value="ECO:0000318"/>
    <property type="project" value="GO_Central"/>
</dbReference>
<dbReference type="GO" id="GO:0060080">
    <property type="term" value="P:inhibitory postsynaptic potential"/>
    <property type="evidence" value="ECO:0007669"/>
    <property type="project" value="Ensembl"/>
</dbReference>
<dbReference type="GO" id="GO:0007626">
    <property type="term" value="P:locomotory behavior"/>
    <property type="evidence" value="ECO:0007669"/>
    <property type="project" value="Ensembl"/>
</dbReference>
<dbReference type="GO" id="GO:0046636">
    <property type="term" value="P:negative regulation of alpha-beta T cell activation"/>
    <property type="evidence" value="ECO:0007669"/>
    <property type="project" value="Ensembl"/>
</dbReference>
<dbReference type="GO" id="GO:0050728">
    <property type="term" value="P:negative regulation of inflammatory response"/>
    <property type="evidence" value="ECO:0007669"/>
    <property type="project" value="Ensembl"/>
</dbReference>
<dbReference type="GO" id="GO:2001235">
    <property type="term" value="P:positive regulation of apoptotic signaling pathway"/>
    <property type="evidence" value="ECO:0007669"/>
    <property type="project" value="Ensembl"/>
</dbReference>
<dbReference type="GO" id="GO:0032230">
    <property type="term" value="P:positive regulation of synaptic transmission, GABAergic"/>
    <property type="evidence" value="ECO:0007669"/>
    <property type="project" value="Ensembl"/>
</dbReference>
<dbReference type="GO" id="GO:0001975">
    <property type="term" value="P:response to amphetamine"/>
    <property type="evidence" value="ECO:0007669"/>
    <property type="project" value="Ensembl"/>
</dbReference>
<dbReference type="GO" id="GO:0014074">
    <property type="term" value="P:response to purine-containing compound"/>
    <property type="evidence" value="ECO:0007669"/>
    <property type="project" value="Ensembl"/>
</dbReference>
<dbReference type="GO" id="GO:0001963">
    <property type="term" value="P:synaptic transmission, dopaminergic"/>
    <property type="evidence" value="ECO:0007669"/>
    <property type="project" value="Ensembl"/>
</dbReference>
<dbReference type="CDD" id="cd15068">
    <property type="entry name" value="7tmA_Adenosine_R_A2A"/>
    <property type="match status" value="1"/>
</dbReference>
<dbReference type="FunFam" id="1.20.1070.10:FF:000061">
    <property type="entry name" value="Adenosine receptor A2"/>
    <property type="match status" value="1"/>
</dbReference>
<dbReference type="Gene3D" id="1.20.1070.10">
    <property type="entry name" value="Rhodopsin 7-helix transmembrane proteins"/>
    <property type="match status" value="1"/>
</dbReference>
<dbReference type="InterPro" id="IPR001513">
    <property type="entry name" value="Adeno_A2A_rcpt"/>
</dbReference>
<dbReference type="InterPro" id="IPR001634">
    <property type="entry name" value="Adenosn_rcpt"/>
</dbReference>
<dbReference type="InterPro" id="IPR000276">
    <property type="entry name" value="GPCR_Rhodpsn"/>
</dbReference>
<dbReference type="InterPro" id="IPR017452">
    <property type="entry name" value="GPCR_Rhodpsn_7TM"/>
</dbReference>
<dbReference type="PANTHER" id="PTHR24246:SF47">
    <property type="entry name" value="ADENOSINE RECEPTOR A2A"/>
    <property type="match status" value="1"/>
</dbReference>
<dbReference type="PANTHER" id="PTHR24246">
    <property type="entry name" value="OLFACTORY RECEPTOR AND ADENOSINE RECEPTOR"/>
    <property type="match status" value="1"/>
</dbReference>
<dbReference type="Pfam" id="PF00001">
    <property type="entry name" value="7tm_1"/>
    <property type="match status" value="1"/>
</dbReference>
<dbReference type="PRINTS" id="PR00553">
    <property type="entry name" value="ADENOSINA2AR"/>
</dbReference>
<dbReference type="PRINTS" id="PR00424">
    <property type="entry name" value="ADENOSINER"/>
</dbReference>
<dbReference type="PRINTS" id="PR00237">
    <property type="entry name" value="GPCRRHODOPSN"/>
</dbReference>
<dbReference type="SMART" id="SM01381">
    <property type="entry name" value="7TM_GPCR_Srsx"/>
    <property type="match status" value="1"/>
</dbReference>
<dbReference type="SUPFAM" id="SSF81321">
    <property type="entry name" value="Family A G protein-coupled receptor-like"/>
    <property type="match status" value="1"/>
</dbReference>
<dbReference type="PROSITE" id="PS00237">
    <property type="entry name" value="G_PROTEIN_RECEP_F1_1"/>
    <property type="match status" value="1"/>
</dbReference>
<dbReference type="PROSITE" id="PS50262">
    <property type="entry name" value="G_PROTEIN_RECEP_F1_2"/>
    <property type="match status" value="1"/>
</dbReference>
<feature type="chain" id="PRO_0000068998" description="Adenosine receptor A2a">
    <location>
        <begin position="1"/>
        <end position="412"/>
    </location>
</feature>
<feature type="topological domain" description="Extracellular" evidence="1">
    <location>
        <begin position="1"/>
        <end position="7"/>
    </location>
</feature>
<feature type="transmembrane region" description="Helical; Name=1" evidence="1">
    <location>
        <begin position="8"/>
        <end position="32"/>
    </location>
</feature>
<feature type="topological domain" description="Cytoplasmic" evidence="1">
    <location>
        <begin position="33"/>
        <end position="42"/>
    </location>
</feature>
<feature type="transmembrane region" description="Helical; Name=2" evidence="1">
    <location>
        <begin position="43"/>
        <end position="66"/>
    </location>
</feature>
<feature type="topological domain" description="Extracellular" evidence="1">
    <location>
        <begin position="67"/>
        <end position="77"/>
    </location>
</feature>
<feature type="transmembrane region" description="Helical; Name=3" evidence="1">
    <location>
        <begin position="78"/>
        <end position="100"/>
    </location>
</feature>
<feature type="topological domain" description="Cytoplasmic" evidence="1">
    <location>
        <begin position="101"/>
        <end position="120"/>
    </location>
</feature>
<feature type="transmembrane region" description="Helical; Name=4" evidence="1">
    <location>
        <begin position="121"/>
        <end position="143"/>
    </location>
</feature>
<feature type="topological domain" description="Extracellular" evidence="1">
    <location>
        <begin position="144"/>
        <end position="173"/>
    </location>
</feature>
<feature type="transmembrane region" description="Helical; Name=5" evidence="1">
    <location>
        <begin position="174"/>
        <end position="198"/>
    </location>
</feature>
<feature type="topological domain" description="Cytoplasmic" evidence="1">
    <location>
        <begin position="199"/>
        <end position="234"/>
    </location>
</feature>
<feature type="transmembrane region" description="Helical; Name=6" evidence="1">
    <location>
        <begin position="235"/>
        <end position="258"/>
    </location>
</feature>
<feature type="topological domain" description="Extracellular" evidence="1">
    <location>
        <begin position="259"/>
        <end position="266"/>
    </location>
</feature>
<feature type="transmembrane region" description="Helical; Name=7" evidence="1">
    <location>
        <begin position="267"/>
        <end position="290"/>
    </location>
</feature>
<feature type="topological domain" description="Cytoplasmic" evidence="1">
    <location>
        <begin position="291"/>
        <end position="412"/>
    </location>
</feature>
<feature type="region of interest" description="Disordered" evidence="7">
    <location>
        <begin position="368"/>
        <end position="412"/>
    </location>
</feature>
<feature type="binding site" evidence="3">
    <location>
        <position position="169"/>
    </location>
    <ligand>
        <name>adenosine</name>
        <dbReference type="ChEBI" id="CHEBI:16335"/>
        <note>agonist</note>
    </ligand>
</feature>
<feature type="binding site" evidence="3">
    <location>
        <position position="253"/>
    </location>
    <ligand>
        <name>adenosine</name>
        <dbReference type="ChEBI" id="CHEBI:16335"/>
        <note>agonist</note>
    </ligand>
</feature>
<feature type="binding site" evidence="3">
    <location>
        <position position="277"/>
    </location>
    <ligand>
        <name>adenosine</name>
        <dbReference type="ChEBI" id="CHEBI:16335"/>
        <note>agonist</note>
    </ligand>
</feature>
<feature type="binding site" evidence="3">
    <location>
        <position position="278"/>
    </location>
    <ligand>
        <name>adenosine</name>
        <dbReference type="ChEBI" id="CHEBI:16335"/>
        <note>agonist</note>
    </ligand>
</feature>
<feature type="glycosylation site" description="N-linked (GlcNAc...) asparagine" evidence="5">
    <location>
        <position position="154"/>
    </location>
</feature>
<feature type="disulfide bond" evidence="6">
    <location>
        <begin position="71"/>
        <end position="159"/>
    </location>
</feature>
<feature type="disulfide bond" evidence="6">
    <location>
        <begin position="74"/>
        <end position="146"/>
    </location>
</feature>
<feature type="disulfide bond" evidence="6">
    <location>
        <begin position="77"/>
        <end position="166"/>
    </location>
</feature>
<feature type="disulfide bond" evidence="6">
    <location>
        <begin position="259"/>
        <end position="262"/>
    </location>
</feature>
<accession>Q6TLI7</accession>
<proteinExistence type="evidence at transcript level"/>
<comment type="function">
    <text evidence="2">Receptor for adenosine (By similarity). The activity of this receptor is mediated by G proteins which activate adenylyl cyclase (By similarity).</text>
</comment>
<comment type="subunit">
    <text evidence="3 4">Interacts (via cytoplasmic C-terminal domain) with USP4; the interaction is direct (By similarity). May interact with DRD4 (By similarity). Interacts with NECAB2 (By similarity). Interacts (via cytoplasmic C-terminal domain) with GAS2L2; interaction enhances receptor-mediated adenylyl cyclase activity (By similarity).</text>
</comment>
<comment type="subcellular location">
    <subcellularLocation>
        <location evidence="4">Cell membrane</location>
        <topology evidence="4">Multi-pass membrane protein</topology>
    </subcellularLocation>
    <text evidence="4">Colocalizes with GAS2L2 at neuronal processes.</text>
</comment>
<comment type="domain">
    <text evidence="1">The cytoplasmic C-terminal domain is necessary for targeting the non-ubiquitinated form of this protein to the cell surface.</text>
</comment>
<comment type="PTM">
    <text evidence="1">Ubiquitinated. Deubiquitinated by USP4; leading to stabilization and expression at the cell surface (By similarity).</text>
</comment>
<comment type="similarity">
    <text evidence="6">Belongs to the G-protein coupled receptor 1 family.</text>
</comment>
<organism>
    <name type="scientific">Equus caballus</name>
    <name type="common">Horse</name>
    <dbReference type="NCBI Taxonomy" id="9796"/>
    <lineage>
        <taxon>Eukaryota</taxon>
        <taxon>Metazoa</taxon>
        <taxon>Chordata</taxon>
        <taxon>Craniata</taxon>
        <taxon>Vertebrata</taxon>
        <taxon>Euteleostomi</taxon>
        <taxon>Mammalia</taxon>
        <taxon>Eutheria</taxon>
        <taxon>Laurasiatheria</taxon>
        <taxon>Perissodactyla</taxon>
        <taxon>Equidae</taxon>
        <taxon>Equus</taxon>
    </lineage>
</organism>
<evidence type="ECO:0000250" key="1"/>
<evidence type="ECO:0000250" key="2">
    <source>
        <dbReference type="UniProtKB" id="P11617"/>
    </source>
</evidence>
<evidence type="ECO:0000250" key="3">
    <source>
        <dbReference type="UniProtKB" id="P29274"/>
    </source>
</evidence>
<evidence type="ECO:0000250" key="4">
    <source>
        <dbReference type="UniProtKB" id="P30543"/>
    </source>
</evidence>
<evidence type="ECO:0000255" key="5"/>
<evidence type="ECO:0000255" key="6">
    <source>
        <dbReference type="PROSITE-ProRule" id="PRU00521"/>
    </source>
</evidence>
<evidence type="ECO:0000256" key="7">
    <source>
        <dbReference type="SAM" id="MobiDB-lite"/>
    </source>
</evidence>
<protein>
    <recommendedName>
        <fullName>Adenosine receptor A2a</fullName>
    </recommendedName>
</protein>
<sequence>MPTVGSLVYIMVELAIALLAILGNMLVCWAVWLNSNLQNVTNYFVVSLAAADIAVGVLAIPFAITISTGFCAACHGCLFIACFVLVLTQSSIFSLLAIAIDRYIAIRIPLRYNGLVTGTRAKGVIAVCWVLSFAIGLTPMLGWNNCHHWGEGENQSQGCGEGQVACLFEDVVPMNYMVYYNFFACVLVPLLLMLGVYLRIFLAARRQLKQMETQPLPGERARSTLQKEVHAAKSLAIIVGLFALCWLPLHIINCFTFFCPECPHAPLWLMYPAIILSHFNSVVNPFIYAYRIREFRHTFHKIIRSHILRRQEPFKAGGTSARALAAHGSDAEQVSLRLNGHPSGVCPNGSAPHPERRPNGYALGLVSRASARESPGDTGLPDVELLSHELHGASPESPGLEGPLAQDGAGVS</sequence>
<keyword id="KW-1003">Cell membrane</keyword>
<keyword id="KW-1015">Disulfide bond</keyword>
<keyword id="KW-0297">G-protein coupled receptor</keyword>
<keyword id="KW-0325">Glycoprotein</keyword>
<keyword id="KW-0472">Membrane</keyword>
<keyword id="KW-0675">Receptor</keyword>
<keyword id="KW-1185">Reference proteome</keyword>
<keyword id="KW-0807">Transducer</keyword>
<keyword id="KW-0812">Transmembrane</keyword>
<keyword id="KW-1133">Transmembrane helix</keyword>
<keyword id="KW-0832">Ubl conjugation</keyword>
<gene>
    <name type="primary">ADORA2A</name>
</gene>